<evidence type="ECO:0000250" key="1"/>
<evidence type="ECO:0000250" key="2">
    <source>
        <dbReference type="UniProtKB" id="E4QP00"/>
    </source>
</evidence>
<evidence type="ECO:0000255" key="3"/>
<evidence type="ECO:0000269" key="4">
    <source>
    </source>
</evidence>
<evidence type="ECO:0000269" key="5">
    <source>
    </source>
</evidence>
<evidence type="ECO:0000269" key="6">
    <source>
    </source>
</evidence>
<evidence type="ECO:0000305" key="7"/>
<protein>
    <recommendedName>
        <fullName>Alcohol oxidase</fullName>
        <shortName>AO</shortName>
        <shortName>AOX</shortName>
        <ecNumber>1.1.3.13</ecNumber>
    </recommendedName>
    <alternativeName>
        <fullName>Methanol oxidase</fullName>
        <shortName>MOX</shortName>
    </alternativeName>
</protein>
<organism>
    <name type="scientific">Pichia angusta</name>
    <name type="common">Yeast</name>
    <name type="synonym">Hansenula polymorpha</name>
    <dbReference type="NCBI Taxonomy" id="870730"/>
    <lineage>
        <taxon>Eukaryota</taxon>
        <taxon>Fungi</taxon>
        <taxon>Dikarya</taxon>
        <taxon>Ascomycota</taxon>
        <taxon>Saccharomycotina</taxon>
        <taxon>Pichiomycetes</taxon>
        <taxon>Pichiales</taxon>
        <taxon>Pichiaceae</taxon>
        <taxon>Ogataea</taxon>
    </lineage>
</organism>
<reference key="1">
    <citation type="journal article" date="1985" name="Nucleic Acids Res.">
        <title>Molecular cloning and characterization of a gene coding for methanol oxidase in Hansenula polymorpha.</title>
        <authorList>
            <person name="Ledeboer A.M."/>
            <person name="Edens L."/>
            <person name="Maat J."/>
            <person name="Visser C."/>
            <person name="Bos J.W."/>
            <person name="Verrips C.T."/>
        </authorList>
    </citation>
    <scope>NUCLEOTIDE SEQUENCE [GENOMIC DNA]</scope>
    <scope>FUNCTION</scope>
    <source>
        <strain>ATCC 34438 / CBS 4732 / DSM 70277 / JCM 3621 / NBRC 1476 / NRRL Y-5445</strain>
    </source>
</reference>
<reference key="2">
    <citation type="journal article" date="1991" name="Mol. Biol. Evol.">
        <title>Drosophila glucose dehydrogenase and yeast alcohol oxidase are homologous and share N-terminal homology with other flavoenzymes.</title>
        <authorList>
            <person name="Cavener D.R."/>
            <person name="Krasney P."/>
        </authorList>
    </citation>
    <scope>SIMILARITY TO DROSOPHILA GLUCOSE DEHYDROGENASE</scope>
</reference>
<reference key="3">
    <citation type="journal article" date="1991" name="J. Gen. Microbiol.">
        <title>Modification of flavin adenine dinucleotide in alcohol oxidase of the yeast Hansenula polymorpha.</title>
        <authorList>
            <person name="Bystrykh L.V."/>
            <person name="Dijkhuizen L."/>
            <person name="Harder W."/>
        </authorList>
    </citation>
    <scope>COFACTOR</scope>
    <source>
        <strain>ATCC 26012 / NRRL Y-7560 / DL-1</strain>
        <strain>ATCC 34438 / CBS 4732 / DSM 70277 / JCM 3621 / NBRC 1476 / NRRL Y-5445</strain>
    </source>
</reference>
<reference key="4">
    <citation type="journal article" date="1991" name="Yeast">
        <title>Biosynthesis and assembly of alcohol oxidase, a peroxisomal matrix protein in methylotrophic yeasts: a review.</title>
        <authorList>
            <person name="van der Klei I.J."/>
            <person name="Harder W."/>
            <person name="Veenhuis M."/>
        </authorList>
    </citation>
    <scope>REVIEW</scope>
</reference>
<reference key="5">
    <citation type="journal article" date="1996" name="Yeast">
        <title>Flavin adenine dinucleotide binding is the crucial step in alcohol oxidase assembly in the yeast Hansenula polymorpha.</title>
        <authorList>
            <person name="Evers M.E."/>
            <person name="Titorenko V."/>
            <person name="Harder W."/>
            <person name="ven der Klei I."/>
            <person name="Veenhuis M."/>
        </authorList>
    </citation>
    <scope>COFACTOR</scope>
    <scope>SUBUNIT</scope>
    <source>
        <strain>ATCC 200838</strain>
    </source>
</reference>
<keyword id="KW-0274">FAD</keyword>
<keyword id="KW-0285">Flavoprotein</keyword>
<keyword id="KW-0485">Methanol utilization</keyword>
<keyword id="KW-0560">Oxidoreductase</keyword>
<keyword id="KW-0576">Peroxisome</keyword>
<proteinExistence type="evidence at protein level"/>
<dbReference type="EC" id="1.1.3.13"/>
<dbReference type="EMBL" id="X02425">
    <property type="protein sequence ID" value="CAA26278.1"/>
    <property type="molecule type" value="Genomic_DNA"/>
</dbReference>
<dbReference type="PIR" id="A23010">
    <property type="entry name" value="OXHQAP"/>
</dbReference>
<dbReference type="SMR" id="P04841"/>
<dbReference type="CAZy" id="AA3">
    <property type="family name" value="Auxiliary Activities 3"/>
</dbReference>
<dbReference type="PhylomeDB" id="P04841"/>
<dbReference type="BRENDA" id="1.1.3.13">
    <property type="organism ID" value="2587"/>
</dbReference>
<dbReference type="UniPathway" id="UPA00147"/>
<dbReference type="GO" id="GO:0005782">
    <property type="term" value="C:peroxisomal matrix"/>
    <property type="evidence" value="ECO:0007669"/>
    <property type="project" value="UniProtKB-SubCell"/>
</dbReference>
<dbReference type="GO" id="GO:0047639">
    <property type="term" value="F:alcohol oxidase activity"/>
    <property type="evidence" value="ECO:0007669"/>
    <property type="project" value="UniProtKB-EC"/>
</dbReference>
<dbReference type="GO" id="GO:0050660">
    <property type="term" value="F:flavin adenine dinucleotide binding"/>
    <property type="evidence" value="ECO:0007669"/>
    <property type="project" value="InterPro"/>
</dbReference>
<dbReference type="GO" id="GO:0046188">
    <property type="term" value="P:methane catabolic process"/>
    <property type="evidence" value="ECO:0007669"/>
    <property type="project" value="UniProtKB-UniPathway"/>
</dbReference>
<dbReference type="GO" id="GO:0015945">
    <property type="term" value="P:methanol metabolic process"/>
    <property type="evidence" value="ECO:0007669"/>
    <property type="project" value="UniProtKB-KW"/>
</dbReference>
<dbReference type="Gene3D" id="3.50.50.60">
    <property type="entry name" value="FAD/NAD(P)-binding domain"/>
    <property type="match status" value="2"/>
</dbReference>
<dbReference type="Gene3D" id="3.30.560.10">
    <property type="entry name" value="Glucose Oxidase, domain 3"/>
    <property type="match status" value="2"/>
</dbReference>
<dbReference type="InterPro" id="IPR036188">
    <property type="entry name" value="FAD/NAD-bd_sf"/>
</dbReference>
<dbReference type="InterPro" id="IPR012132">
    <property type="entry name" value="GMC_OxRdtase"/>
</dbReference>
<dbReference type="InterPro" id="IPR000172">
    <property type="entry name" value="GMC_OxRdtase_N"/>
</dbReference>
<dbReference type="InterPro" id="IPR007867">
    <property type="entry name" value="GMC_OxRtase_C"/>
</dbReference>
<dbReference type="PANTHER" id="PTHR11552">
    <property type="entry name" value="GLUCOSE-METHANOL-CHOLINE GMC OXIDOREDUCTASE"/>
    <property type="match status" value="1"/>
</dbReference>
<dbReference type="PANTHER" id="PTHR11552:SF119">
    <property type="entry name" value="GLUCOSE-METHANOL-CHOLINE OXIDOREDUCTASE N-TERMINAL DOMAIN-CONTAINING PROTEIN"/>
    <property type="match status" value="1"/>
</dbReference>
<dbReference type="Pfam" id="PF05199">
    <property type="entry name" value="GMC_oxred_C"/>
    <property type="match status" value="1"/>
</dbReference>
<dbReference type="Pfam" id="PF00732">
    <property type="entry name" value="GMC_oxred_N"/>
    <property type="match status" value="1"/>
</dbReference>
<dbReference type="PIRSF" id="PIRSF000137">
    <property type="entry name" value="Alcohol_oxidase"/>
    <property type="match status" value="1"/>
</dbReference>
<dbReference type="SUPFAM" id="SSF54373">
    <property type="entry name" value="FAD-linked reductases, C-terminal domain"/>
    <property type="match status" value="1"/>
</dbReference>
<dbReference type="SUPFAM" id="SSF51905">
    <property type="entry name" value="FAD/NAD(P)-binding domain"/>
    <property type="match status" value="1"/>
</dbReference>
<dbReference type="PROSITE" id="PS00623">
    <property type="entry name" value="GMC_OXRED_1"/>
    <property type="match status" value="1"/>
</dbReference>
<dbReference type="PROSITE" id="PS00624">
    <property type="entry name" value="GMC_OXRED_2"/>
    <property type="match status" value="1"/>
</dbReference>
<feature type="initiator methionine" description="Removed" evidence="1">
    <location>
        <position position="1"/>
    </location>
</feature>
<feature type="chain" id="PRO_0000205581" description="Alcohol oxidase">
    <location>
        <begin position="2"/>
        <end position="664"/>
    </location>
</feature>
<feature type="short sequence motif" description="Microbody targeting signal" evidence="3">
    <location>
        <begin position="662"/>
        <end position="664"/>
    </location>
</feature>
<feature type="active site" description="Proton acceptor" evidence="2">
    <location>
        <position position="568"/>
    </location>
</feature>
<feature type="binding site" evidence="7">
    <location>
        <begin position="8"/>
        <end position="39"/>
    </location>
    <ligand>
        <name>FAD</name>
        <dbReference type="ChEBI" id="CHEBI:57692"/>
    </ligand>
</feature>
<gene>
    <name type="primary">MOX</name>
</gene>
<comment type="function">
    <text evidence="5">Catalyzes the oxidation of methanol to formaldehyde and hydrogen peroxide, the first step in the methanol utilization pathway of methylotrophic yeasts.</text>
</comment>
<comment type="catalytic activity">
    <reaction>
        <text>a primary alcohol + O2 = an aldehyde + H2O2</text>
        <dbReference type="Rhea" id="RHEA:19829"/>
        <dbReference type="ChEBI" id="CHEBI:15379"/>
        <dbReference type="ChEBI" id="CHEBI:15734"/>
        <dbReference type="ChEBI" id="CHEBI:16240"/>
        <dbReference type="ChEBI" id="CHEBI:17478"/>
        <dbReference type="EC" id="1.1.3.13"/>
    </reaction>
</comment>
<comment type="cofactor">
    <cofactor evidence="4 6">
        <name>FAD</name>
        <dbReference type="ChEBI" id="CHEBI:57692"/>
    </cofactor>
    <text evidence="4 6">May possess two different forms of flavin adenine dinucleotide, classical FAD and so-called modified FAD (mFAD), a stereochemical FAD analog, in which the C2 carbon of the ribityl chain has changed from the R to the S configuration. Conversion of FAD into mFAD was observed both in purified preparations of the enzyme and in cells grown in batch and continuous culture. The relative amount of mFAD in the enzyme varied from 5 to 95%, depending on the growth or storage conditions. The presence of mFAD led to a slight decrease in Vmax and a significant decrease in the KM of alcohol oxidase with respect to methanol.</text>
</comment>
<comment type="pathway">
    <text>Energy metabolism; methane degradation.</text>
</comment>
<comment type="subunit">
    <text evidence="6">Homooctamer.</text>
</comment>
<comment type="subcellular location">
    <subcellularLocation>
        <location evidence="1">Peroxisome matrix</location>
    </subcellularLocation>
</comment>
<comment type="induction">
    <text evidence="1">Induced by methanol. Subject to strong carbon catabolite repression (By similarity).</text>
</comment>
<comment type="domain">
    <text evidence="1">The C-terminal peroxisomal targeting signal (PTS) is essential for the efficient targeting and import of AOX into peroxisomes via the PTS1 pathway.</text>
</comment>
<comment type="similarity">
    <text evidence="7">Belongs to the GMC oxidoreductase family.</text>
</comment>
<sequence length="664" mass="74089">MAIPDEFDIIVVGGGSTGCCIAGRLANLDDQNLTVALIEGGENNINNPWVYLPGVYPRNMRLDSKTATFYSSRPSKALNGRRAIVPCANILGGGSSINFLMYTRASASDYDDWESEGWSTDELLPLIKKIETYQRPCNNRDLHGFDGPIKVSFGNYTYPTCQDFLRAAESQGIPVVDDLEDFKTSHGAEHWLKWINRDLGRRSDSAHAYVHPTMRNKQSLFLITSTKCDKVIIEDGKAVAVRTVPMKPLNPKKPVSRTFRARKQIVISCGTISSPLVLQRSGIGAAHHLRSVGVKPIVDLPGVGENFQDHYCFFTPYYVKPDVPTFDDFVRGDPVAQKAAFDQWYSNKDGPLTTNGIEAGVKIRPTEEELATADEDFRRGYAEYFENKPDKPLMHYSVISGFFGDHTKIPNGKFMTMFHFLEYPFSRGFVRITSANPYDAPDFDPGFLNDERDLWPMVWAYKKSRETARRMESFAGEVTSHHPLFKVDSPARARDLDLETCSAYAGPKHLTANLYHGSWTVPIDKPTPKNDFHVTSNQVQLHSDIEYTEEDDEAIVNYIKEHTETTWHCLGTCSMAPREGSKIAPKGGVLDARLNVYGVQNLKVADLSVCPDNVGCNTYSTALTIGEKAATLVAEDLGYSGSDLDMTIPNFRLGTYEETGLARF</sequence>
<accession>P04841</accession>
<name>ALOX_PICAN</name>